<dbReference type="EC" id="4.2.1.20" evidence="1"/>
<dbReference type="EMBL" id="AE015929">
    <property type="protein sequence ID" value="AAO04651.1"/>
    <property type="molecule type" value="Genomic_DNA"/>
</dbReference>
<dbReference type="RefSeq" id="NP_764609.1">
    <property type="nucleotide sequence ID" value="NC_004461.1"/>
</dbReference>
<dbReference type="RefSeq" id="WP_002456200.1">
    <property type="nucleotide sequence ID" value="NZ_WBME01000002.1"/>
</dbReference>
<dbReference type="SMR" id="Q8CPB0"/>
<dbReference type="GeneID" id="50018819"/>
<dbReference type="KEGG" id="sep:SE_1054"/>
<dbReference type="PATRIC" id="fig|176280.10.peg.1030"/>
<dbReference type="eggNOG" id="COG0159">
    <property type="taxonomic scope" value="Bacteria"/>
</dbReference>
<dbReference type="HOGENOM" id="CLU_016734_0_0_9"/>
<dbReference type="OrthoDB" id="9804578at2"/>
<dbReference type="UniPathway" id="UPA00035">
    <property type="reaction ID" value="UER00044"/>
</dbReference>
<dbReference type="Proteomes" id="UP000001411">
    <property type="component" value="Chromosome"/>
</dbReference>
<dbReference type="GO" id="GO:0005829">
    <property type="term" value="C:cytosol"/>
    <property type="evidence" value="ECO:0007669"/>
    <property type="project" value="TreeGrafter"/>
</dbReference>
<dbReference type="GO" id="GO:0004834">
    <property type="term" value="F:tryptophan synthase activity"/>
    <property type="evidence" value="ECO:0007669"/>
    <property type="project" value="UniProtKB-UniRule"/>
</dbReference>
<dbReference type="CDD" id="cd04724">
    <property type="entry name" value="Tryptophan_synthase_alpha"/>
    <property type="match status" value="1"/>
</dbReference>
<dbReference type="Gene3D" id="3.20.20.70">
    <property type="entry name" value="Aldolase class I"/>
    <property type="match status" value="1"/>
</dbReference>
<dbReference type="HAMAP" id="MF_00131">
    <property type="entry name" value="Trp_synth_alpha"/>
    <property type="match status" value="1"/>
</dbReference>
<dbReference type="InterPro" id="IPR013785">
    <property type="entry name" value="Aldolase_TIM"/>
</dbReference>
<dbReference type="InterPro" id="IPR011060">
    <property type="entry name" value="RibuloseP-bd_barrel"/>
</dbReference>
<dbReference type="InterPro" id="IPR018204">
    <property type="entry name" value="Trp_synthase_alpha_AS"/>
</dbReference>
<dbReference type="InterPro" id="IPR002028">
    <property type="entry name" value="Trp_synthase_suA"/>
</dbReference>
<dbReference type="NCBIfam" id="TIGR00262">
    <property type="entry name" value="trpA"/>
    <property type="match status" value="1"/>
</dbReference>
<dbReference type="PANTHER" id="PTHR43406:SF1">
    <property type="entry name" value="TRYPTOPHAN SYNTHASE ALPHA CHAIN, CHLOROPLASTIC"/>
    <property type="match status" value="1"/>
</dbReference>
<dbReference type="PANTHER" id="PTHR43406">
    <property type="entry name" value="TRYPTOPHAN SYNTHASE, ALPHA CHAIN"/>
    <property type="match status" value="1"/>
</dbReference>
<dbReference type="Pfam" id="PF00290">
    <property type="entry name" value="Trp_syntA"/>
    <property type="match status" value="1"/>
</dbReference>
<dbReference type="SUPFAM" id="SSF51366">
    <property type="entry name" value="Ribulose-phoshate binding barrel"/>
    <property type="match status" value="1"/>
</dbReference>
<dbReference type="PROSITE" id="PS00167">
    <property type="entry name" value="TRP_SYNTHASE_ALPHA"/>
    <property type="match status" value="1"/>
</dbReference>
<name>TRPA_STAES</name>
<gene>
    <name evidence="1" type="primary">trpA</name>
    <name type="ordered locus">SE_1054</name>
</gene>
<proteinExistence type="inferred from homology"/>
<sequence>MSKLFIPYIMGDLNFIHHLKTLTENGADIVEIGVPFSDPVADGPIIMKAGRNAIDEGSNIKFIFDELIKNKNTISSKYVLMTYYNILSAYGEELFLDKCDEAGVYGLIIPDLPYELTKKFKKDFYHHSVKIISLIAMTASDARIMQIAKNSEGFIYTVTMNATTGNSGEFHPDLKRKIEYIKKVSKIPVVAGFGIKNPEHVKDIASVADGIVIGSEIVKRIEIDSRKEFITYIKSIRTTLNSL</sequence>
<feature type="chain" id="PRO_0000098849" description="Tryptophan synthase alpha chain">
    <location>
        <begin position="1"/>
        <end position="243"/>
    </location>
</feature>
<feature type="active site" description="Proton acceptor" evidence="1">
    <location>
        <position position="31"/>
    </location>
</feature>
<feature type="active site" description="Proton acceptor" evidence="1">
    <location>
        <position position="42"/>
    </location>
</feature>
<comment type="function">
    <text evidence="1">The alpha subunit is responsible for the aldol cleavage of indoleglycerol phosphate to indole and glyceraldehyde 3-phosphate.</text>
</comment>
<comment type="catalytic activity">
    <reaction evidence="1">
        <text>(1S,2R)-1-C-(indol-3-yl)glycerol 3-phosphate + L-serine = D-glyceraldehyde 3-phosphate + L-tryptophan + H2O</text>
        <dbReference type="Rhea" id="RHEA:10532"/>
        <dbReference type="ChEBI" id="CHEBI:15377"/>
        <dbReference type="ChEBI" id="CHEBI:33384"/>
        <dbReference type="ChEBI" id="CHEBI:57912"/>
        <dbReference type="ChEBI" id="CHEBI:58866"/>
        <dbReference type="ChEBI" id="CHEBI:59776"/>
        <dbReference type="EC" id="4.2.1.20"/>
    </reaction>
</comment>
<comment type="pathway">
    <text evidence="1">Amino-acid biosynthesis; L-tryptophan biosynthesis; L-tryptophan from chorismate: step 5/5.</text>
</comment>
<comment type="subunit">
    <text evidence="1">Tetramer of two alpha and two beta chains.</text>
</comment>
<comment type="similarity">
    <text evidence="1">Belongs to the TrpA family.</text>
</comment>
<organism>
    <name type="scientific">Staphylococcus epidermidis (strain ATCC 12228 / FDA PCI 1200)</name>
    <dbReference type="NCBI Taxonomy" id="176280"/>
    <lineage>
        <taxon>Bacteria</taxon>
        <taxon>Bacillati</taxon>
        <taxon>Bacillota</taxon>
        <taxon>Bacilli</taxon>
        <taxon>Bacillales</taxon>
        <taxon>Staphylococcaceae</taxon>
        <taxon>Staphylococcus</taxon>
    </lineage>
</organism>
<protein>
    <recommendedName>
        <fullName evidence="1">Tryptophan synthase alpha chain</fullName>
        <ecNumber evidence="1">4.2.1.20</ecNumber>
    </recommendedName>
</protein>
<evidence type="ECO:0000255" key="1">
    <source>
        <dbReference type="HAMAP-Rule" id="MF_00131"/>
    </source>
</evidence>
<keyword id="KW-0028">Amino-acid biosynthesis</keyword>
<keyword id="KW-0057">Aromatic amino acid biosynthesis</keyword>
<keyword id="KW-0456">Lyase</keyword>
<keyword id="KW-0822">Tryptophan biosynthesis</keyword>
<accession>Q8CPB0</accession>
<reference key="1">
    <citation type="journal article" date="2003" name="Mol. Microbiol.">
        <title>Genome-based analysis of virulence genes in a non-biofilm-forming Staphylococcus epidermidis strain (ATCC 12228).</title>
        <authorList>
            <person name="Zhang Y.-Q."/>
            <person name="Ren S.-X."/>
            <person name="Li H.-L."/>
            <person name="Wang Y.-X."/>
            <person name="Fu G."/>
            <person name="Yang J."/>
            <person name="Qin Z.-Q."/>
            <person name="Miao Y.-G."/>
            <person name="Wang W.-Y."/>
            <person name="Chen R.-S."/>
            <person name="Shen Y."/>
            <person name="Chen Z."/>
            <person name="Yuan Z.-H."/>
            <person name="Zhao G.-P."/>
            <person name="Qu D."/>
            <person name="Danchin A."/>
            <person name="Wen Y.-M."/>
        </authorList>
    </citation>
    <scope>NUCLEOTIDE SEQUENCE [LARGE SCALE GENOMIC DNA]</scope>
    <source>
        <strain>ATCC 12228 / FDA PCI 1200</strain>
    </source>
</reference>